<proteinExistence type="inferred from homology"/>
<dbReference type="EMBL" id="CP000436">
    <property type="protein sequence ID" value="ABI25743.1"/>
    <property type="molecule type" value="Genomic_DNA"/>
</dbReference>
<dbReference type="SMR" id="Q0I5K7"/>
<dbReference type="KEGG" id="hso:HS_1470"/>
<dbReference type="eggNOG" id="COG2985">
    <property type="taxonomic scope" value="Bacteria"/>
</dbReference>
<dbReference type="HOGENOM" id="CLU_035023_3_1_6"/>
<dbReference type="GO" id="GO:0005886">
    <property type="term" value="C:plasma membrane"/>
    <property type="evidence" value="ECO:0007669"/>
    <property type="project" value="UniProtKB-SubCell"/>
</dbReference>
<dbReference type="GO" id="GO:0008324">
    <property type="term" value="F:monoatomic cation transmembrane transporter activity"/>
    <property type="evidence" value="ECO:0007669"/>
    <property type="project" value="InterPro"/>
</dbReference>
<dbReference type="GO" id="GO:0006813">
    <property type="term" value="P:potassium ion transport"/>
    <property type="evidence" value="ECO:0007669"/>
    <property type="project" value="InterPro"/>
</dbReference>
<dbReference type="Gene3D" id="3.30.70.1450">
    <property type="entry name" value="Regulator of K+ conductance, C-terminal domain"/>
    <property type="match status" value="2"/>
</dbReference>
<dbReference type="HAMAP" id="MF_01016">
    <property type="entry name" value="YidE"/>
    <property type="match status" value="1"/>
</dbReference>
<dbReference type="InterPro" id="IPR050144">
    <property type="entry name" value="AAE_transporter"/>
</dbReference>
<dbReference type="InterPro" id="IPR006037">
    <property type="entry name" value="RCK_C"/>
</dbReference>
<dbReference type="InterPro" id="IPR036721">
    <property type="entry name" value="RCK_C_sf"/>
</dbReference>
<dbReference type="InterPro" id="IPR023018">
    <property type="entry name" value="Transpt_YidE_put"/>
</dbReference>
<dbReference type="InterPro" id="IPR006512">
    <property type="entry name" value="YidE_YbjL"/>
</dbReference>
<dbReference type="NCBIfam" id="NF003007">
    <property type="entry name" value="PRK03818.1"/>
    <property type="match status" value="1"/>
</dbReference>
<dbReference type="NCBIfam" id="TIGR01625">
    <property type="entry name" value="YidE_YbjL_dupl"/>
    <property type="match status" value="2"/>
</dbReference>
<dbReference type="PANTHER" id="PTHR30445">
    <property type="entry name" value="K(+)_H(+) ANTIPORTER SUBUNIT KHTT"/>
    <property type="match status" value="1"/>
</dbReference>
<dbReference type="PANTHER" id="PTHR30445:SF3">
    <property type="entry name" value="TRANSPORT PROTEIN YIDE-RELATED"/>
    <property type="match status" value="1"/>
</dbReference>
<dbReference type="Pfam" id="PF06826">
    <property type="entry name" value="Asp-Al_Ex"/>
    <property type="match status" value="2"/>
</dbReference>
<dbReference type="Pfam" id="PF02080">
    <property type="entry name" value="TrkA_C"/>
    <property type="match status" value="1"/>
</dbReference>
<dbReference type="SUPFAM" id="SSF116726">
    <property type="entry name" value="TrkA C-terminal domain-like"/>
    <property type="match status" value="2"/>
</dbReference>
<dbReference type="PROSITE" id="PS51202">
    <property type="entry name" value="RCK_C"/>
    <property type="match status" value="2"/>
</dbReference>
<accession>Q0I5K7</accession>
<gene>
    <name type="ordered locus">HS_1470</name>
</gene>
<feature type="chain" id="PRO_1000063253" description="Putative transport protein HS_1470">
    <location>
        <begin position="1"/>
        <end position="552"/>
    </location>
</feature>
<feature type="transmembrane region" description="Helical" evidence="1">
    <location>
        <begin position="4"/>
        <end position="24"/>
    </location>
</feature>
<feature type="transmembrane region" description="Helical" evidence="1">
    <location>
        <begin position="28"/>
        <end position="48"/>
    </location>
</feature>
<feature type="transmembrane region" description="Helical" evidence="1">
    <location>
        <begin position="67"/>
        <end position="87"/>
    </location>
</feature>
<feature type="transmembrane region" description="Helical" evidence="1">
    <location>
        <begin position="95"/>
        <end position="115"/>
    </location>
</feature>
<feature type="transmembrane region" description="Helical" evidence="1">
    <location>
        <begin position="157"/>
        <end position="177"/>
    </location>
</feature>
<feature type="transmembrane region" description="Helical" evidence="1">
    <location>
        <begin position="370"/>
        <end position="390"/>
    </location>
</feature>
<feature type="transmembrane region" description="Helical" evidence="1">
    <location>
        <begin position="402"/>
        <end position="424"/>
    </location>
</feature>
<feature type="transmembrane region" description="Helical" evidence="1">
    <location>
        <begin position="438"/>
        <end position="458"/>
    </location>
</feature>
<feature type="transmembrane region" description="Helical" evidence="1">
    <location>
        <begin position="463"/>
        <end position="483"/>
    </location>
</feature>
<feature type="transmembrane region" description="Helical" evidence="1">
    <location>
        <begin position="495"/>
        <end position="515"/>
    </location>
</feature>
<feature type="transmembrane region" description="Helical" evidence="1">
    <location>
        <begin position="529"/>
        <end position="549"/>
    </location>
</feature>
<feature type="domain" description="RCK C-terminal 1" evidence="1">
    <location>
        <begin position="190"/>
        <end position="275"/>
    </location>
</feature>
<feature type="domain" description="RCK C-terminal 2" evidence="1">
    <location>
        <begin position="277"/>
        <end position="360"/>
    </location>
</feature>
<evidence type="ECO:0000255" key="1">
    <source>
        <dbReference type="HAMAP-Rule" id="MF_01016"/>
    </source>
</evidence>
<reference key="1">
    <citation type="journal article" date="2007" name="J. Bacteriol.">
        <title>Complete genome sequence of Haemophilus somnus (Histophilus somni) strain 129Pt and comparison to Haemophilus ducreyi 35000HP and Haemophilus influenzae Rd.</title>
        <authorList>
            <person name="Challacombe J.F."/>
            <person name="Duncan A.J."/>
            <person name="Brettin T.S."/>
            <person name="Bruce D."/>
            <person name="Chertkov O."/>
            <person name="Detter J.C."/>
            <person name="Han C.S."/>
            <person name="Misra M."/>
            <person name="Richardson P."/>
            <person name="Tapia R."/>
            <person name="Thayer N."/>
            <person name="Xie G."/>
            <person name="Inzana T.J."/>
        </authorList>
    </citation>
    <scope>NUCLEOTIDE SEQUENCE [LARGE SCALE GENOMIC DNA]</scope>
    <source>
        <strain>129Pt</strain>
    </source>
</reference>
<keyword id="KW-1003">Cell membrane</keyword>
<keyword id="KW-0472">Membrane</keyword>
<keyword id="KW-0677">Repeat</keyword>
<keyword id="KW-0812">Transmembrane</keyword>
<keyword id="KW-1133">Transmembrane helix</keyword>
<keyword id="KW-0813">Transport</keyword>
<comment type="subcellular location">
    <subcellularLocation>
        <location evidence="1">Cell membrane</location>
        <topology evidence="1">Multi-pass membrane protein</topology>
    </subcellularLocation>
</comment>
<comment type="similarity">
    <text evidence="1">Belongs to the AAE transporter (TC 2.A.81) family. YidE subfamily.</text>
</comment>
<name>Y1470_HISS1</name>
<organism>
    <name type="scientific">Histophilus somni (strain 129Pt)</name>
    <name type="common">Haemophilus somnus</name>
    <dbReference type="NCBI Taxonomy" id="205914"/>
    <lineage>
        <taxon>Bacteria</taxon>
        <taxon>Pseudomonadati</taxon>
        <taxon>Pseudomonadota</taxon>
        <taxon>Gammaproteobacteria</taxon>
        <taxon>Pasteurellales</taxon>
        <taxon>Pasteurellaceae</taxon>
        <taxon>Histophilus</taxon>
    </lineage>
</organism>
<sequence>MSDIAITICILALVAVIGLWIGHWKIRGVGLGIGGVLFGGIIVAHFMNQNGLKLDAHTLHFIQEFGLILFVYTIGIQVGPGFFASLLSAGLKLNGLATLIVVLGAVSVFVLYKVVNVDLDIILGIYSGAVTNTPSLGAGQQILTELGIENANSTMGMAYAMAYPFGICGILLSMWLIRLFFKIKVEEEEKQFQKASGQDKESLTTVNVKVTNPNLSGLRLIDIPGFDNKDVVCSRLKRQENISVPSADTIIAIDDVLHLVGEINALKKMKLVIGEEIDMPMTHLAGDLRSERIVVTNEKVLGKRIKHLGIHKKYGVVISRLNRAGVELVPTANTALQFGDVLHIVGRSDTIGNATSIIGNAQQKLQQVQMLPVFIGIGLGVLLGSIPFYIPGFPVALKLGLAGGPLVVALILARIGSVGKLYWFMPPSANLALREIGIVLFLAVVGLKSGGGFVDTLVHGQGLEWMGYGMFITFIPLMITGIIARLYMKLNYLSLCGLLAGSMTDPPALAFANAIKEDSGIAALSYATVYPLSMFLRIMSPQLLAILLWTAM</sequence>
<protein>
    <recommendedName>
        <fullName evidence="1">Putative transport protein HS_1470</fullName>
    </recommendedName>
</protein>